<accession>Q9KRZ5</accession>
<proteinExistence type="inferred from homology"/>
<comment type="function">
    <text evidence="1">Specifically methylates the guanine in position 2445 (m2G2445) and the guanine in position 2069 (m7G2069) of 23S rRNA.</text>
</comment>
<comment type="catalytic activity">
    <reaction evidence="1">
        <text>guanosine(2445) in 23S rRNA + S-adenosyl-L-methionine = N(2)-methylguanosine(2445) in 23S rRNA + S-adenosyl-L-homocysteine + H(+)</text>
        <dbReference type="Rhea" id="RHEA:42740"/>
        <dbReference type="Rhea" id="RHEA-COMP:10215"/>
        <dbReference type="Rhea" id="RHEA-COMP:10216"/>
        <dbReference type="ChEBI" id="CHEBI:15378"/>
        <dbReference type="ChEBI" id="CHEBI:57856"/>
        <dbReference type="ChEBI" id="CHEBI:59789"/>
        <dbReference type="ChEBI" id="CHEBI:74269"/>
        <dbReference type="ChEBI" id="CHEBI:74481"/>
        <dbReference type="EC" id="2.1.1.173"/>
    </reaction>
</comment>
<comment type="catalytic activity">
    <reaction evidence="1">
        <text>guanosine(2069) in 23S rRNA + S-adenosyl-L-methionine = N(2)-methylguanosine(2069) in 23S rRNA + S-adenosyl-L-homocysteine + H(+)</text>
        <dbReference type="Rhea" id="RHEA:43772"/>
        <dbReference type="Rhea" id="RHEA-COMP:10688"/>
        <dbReference type="Rhea" id="RHEA-COMP:10689"/>
        <dbReference type="ChEBI" id="CHEBI:15378"/>
        <dbReference type="ChEBI" id="CHEBI:57856"/>
        <dbReference type="ChEBI" id="CHEBI:59789"/>
        <dbReference type="ChEBI" id="CHEBI:74269"/>
        <dbReference type="ChEBI" id="CHEBI:74481"/>
        <dbReference type="EC" id="2.1.1.264"/>
    </reaction>
</comment>
<comment type="subcellular location">
    <subcellularLocation>
        <location evidence="1">Cytoplasm</location>
    </subcellularLocation>
</comment>
<comment type="similarity">
    <text evidence="1">Belongs to the methyltransferase superfamily. RlmKL family.</text>
</comment>
<evidence type="ECO:0000255" key="1">
    <source>
        <dbReference type="HAMAP-Rule" id="MF_01858"/>
    </source>
</evidence>
<organism>
    <name type="scientific">Vibrio cholerae serotype O1 (strain ATCC 39315 / El Tor Inaba N16961)</name>
    <dbReference type="NCBI Taxonomy" id="243277"/>
    <lineage>
        <taxon>Bacteria</taxon>
        <taxon>Pseudomonadati</taxon>
        <taxon>Pseudomonadota</taxon>
        <taxon>Gammaproteobacteria</taxon>
        <taxon>Vibrionales</taxon>
        <taxon>Vibrionaceae</taxon>
        <taxon>Vibrio</taxon>
    </lineage>
</organism>
<sequence>MNQYLAVTSNGLENLLVEELTQLGINDAKPVQAGVKFKATNEQIYRCCLWSRLASRFVRIVAEFKCQNDLDLYLSTTSVNWVNYFHSSKKLVVDFNGTNREIRNSQYGAMKVKDAIVDCFTKKNLPRPSISKDLADLHIHVRLHKENALLGIDMVGSGLHARGYRTEAGKAPLRETLAAAIILRSGWDASKPLLDPMCGSGTLLIEAAMMAANIAPGLQRKKWGFEALEDFEPELWASVKSEASVQGKRGVKKVETHFYGVDNDNRVLQTAKDNARRAGVEELISFTLGDAAKVKRPENFAEGIVICNPPYGERLGTHPGLIALYTAFGAQLKAEFGGCHASIFSSSDELLSCLRMRADKQFKLNNGALPCHQKNYTIAMREQNSVSNEGTQEILIAPDFANRLKKNFNKIGKWAKREGLDCFRLYDADLPEYNVAIDVYQDHLMIQEYAAPKDIPEEKAKRRLTDIIRAAIQVLDVDANNVVLKVRERQKGTSQYEKLGQQAQTMQITEYGVKLIVNLYDYLDTGLFLDHKITRRRLGQMAQGKDFLNLFAYTGSATVHAACGGAKSTTTVDMSKTYLEWAKENMQLNGQVGRQHQYVQADCLQWLANAQSQYDLIFIDPPTFSNSKRMEQTFDVQRDHVTLMTNLKRLLRPEGTIVFSNNKRHFKMDMEALHALGLNAQNISHQTLPLDFERNKQIHNCWLITHQS</sequence>
<name>RLMKL_VIBCH</name>
<dbReference type="EC" id="2.1.1.173" evidence="1"/>
<dbReference type="EC" id="2.1.1.264" evidence="1"/>
<dbReference type="EMBL" id="AE003852">
    <property type="protein sequence ID" value="AAF94643.1"/>
    <property type="molecule type" value="Genomic_DNA"/>
</dbReference>
<dbReference type="PIR" id="A82195">
    <property type="entry name" value="A82195"/>
</dbReference>
<dbReference type="RefSeq" id="NP_231129.1">
    <property type="nucleotide sequence ID" value="NC_002505.1"/>
</dbReference>
<dbReference type="SMR" id="Q9KRZ5"/>
<dbReference type="STRING" id="243277.VC_1488"/>
<dbReference type="DNASU" id="2613994"/>
<dbReference type="EnsemblBacteria" id="AAF94643">
    <property type="protein sequence ID" value="AAF94643"/>
    <property type="gene ID" value="VC_1488"/>
</dbReference>
<dbReference type="KEGG" id="vch:VC_1488"/>
<dbReference type="PATRIC" id="fig|243277.26.peg.1416"/>
<dbReference type="eggNOG" id="COG0116">
    <property type="taxonomic scope" value="Bacteria"/>
</dbReference>
<dbReference type="eggNOG" id="COG1092">
    <property type="taxonomic scope" value="Bacteria"/>
</dbReference>
<dbReference type="HOGENOM" id="CLU_014042_2_0_6"/>
<dbReference type="Proteomes" id="UP000000584">
    <property type="component" value="Chromosome 1"/>
</dbReference>
<dbReference type="GO" id="GO:0005737">
    <property type="term" value="C:cytoplasm"/>
    <property type="evidence" value="ECO:0007669"/>
    <property type="project" value="UniProtKB-SubCell"/>
</dbReference>
<dbReference type="GO" id="GO:0052915">
    <property type="term" value="F:23S rRNA (guanine(2445)-N(2))-methyltransferase activity"/>
    <property type="evidence" value="ECO:0007669"/>
    <property type="project" value="UniProtKB-UniRule"/>
</dbReference>
<dbReference type="GO" id="GO:0003723">
    <property type="term" value="F:RNA binding"/>
    <property type="evidence" value="ECO:0007669"/>
    <property type="project" value="UniProtKB-KW"/>
</dbReference>
<dbReference type="GO" id="GO:0008990">
    <property type="term" value="F:rRNA (guanine-N2-)-methyltransferase activity"/>
    <property type="evidence" value="ECO:0000318"/>
    <property type="project" value="GO_Central"/>
</dbReference>
<dbReference type="GO" id="GO:0070043">
    <property type="term" value="F:rRNA (guanine-N7-)-methyltransferase activity"/>
    <property type="evidence" value="ECO:0000318"/>
    <property type="project" value="GO_Central"/>
</dbReference>
<dbReference type="CDD" id="cd02440">
    <property type="entry name" value="AdoMet_MTases"/>
    <property type="match status" value="1"/>
</dbReference>
<dbReference type="CDD" id="cd11715">
    <property type="entry name" value="THUMP_AdoMetMT"/>
    <property type="match status" value="1"/>
</dbReference>
<dbReference type="FunFam" id="3.30.750.80:FF:000001">
    <property type="entry name" value="Ribosomal RNA large subunit methyltransferase K/L"/>
    <property type="match status" value="1"/>
</dbReference>
<dbReference type="FunFam" id="3.40.50.150:FF:000039">
    <property type="entry name" value="Ribosomal RNA large subunit methyltransferase K/L"/>
    <property type="match status" value="1"/>
</dbReference>
<dbReference type="Gene3D" id="3.30.2130.30">
    <property type="match status" value="1"/>
</dbReference>
<dbReference type="Gene3D" id="3.30.750.80">
    <property type="entry name" value="RNA methyltransferase domain (HRMD) like"/>
    <property type="match status" value="1"/>
</dbReference>
<dbReference type="Gene3D" id="3.40.50.150">
    <property type="entry name" value="Vaccinia Virus protein VP39"/>
    <property type="match status" value="2"/>
</dbReference>
<dbReference type="HAMAP" id="MF_01858">
    <property type="entry name" value="23SrRNA_methyltr_KL"/>
    <property type="match status" value="1"/>
</dbReference>
<dbReference type="InterPro" id="IPR017244">
    <property type="entry name" value="23SrRNA_methyltr_KL"/>
</dbReference>
<dbReference type="InterPro" id="IPR002052">
    <property type="entry name" value="DNA_methylase_N6_adenine_CS"/>
</dbReference>
<dbReference type="InterPro" id="IPR000241">
    <property type="entry name" value="RlmKL-like_Mtase"/>
</dbReference>
<dbReference type="InterPro" id="IPR053943">
    <property type="entry name" value="RlmKL-like_Mtase_CS"/>
</dbReference>
<dbReference type="InterPro" id="IPR054170">
    <property type="entry name" value="RlmL_1st"/>
</dbReference>
<dbReference type="InterPro" id="IPR019614">
    <property type="entry name" value="SAM-dep_methyl-trfase"/>
</dbReference>
<dbReference type="InterPro" id="IPR029063">
    <property type="entry name" value="SAM-dependent_MTases_sf"/>
</dbReference>
<dbReference type="InterPro" id="IPR004114">
    <property type="entry name" value="THUMP_dom"/>
</dbReference>
<dbReference type="NCBIfam" id="NF008748">
    <property type="entry name" value="PRK11783.1"/>
    <property type="match status" value="1"/>
</dbReference>
<dbReference type="PANTHER" id="PTHR47313">
    <property type="entry name" value="RIBOSOMAL RNA LARGE SUBUNIT METHYLTRANSFERASE K/L"/>
    <property type="match status" value="1"/>
</dbReference>
<dbReference type="PANTHER" id="PTHR47313:SF1">
    <property type="entry name" value="RIBOSOMAL RNA LARGE SUBUNIT METHYLTRANSFERASE K_L"/>
    <property type="match status" value="1"/>
</dbReference>
<dbReference type="Pfam" id="PF10672">
    <property type="entry name" value="Methyltrans_SAM"/>
    <property type="match status" value="1"/>
</dbReference>
<dbReference type="Pfam" id="PF22020">
    <property type="entry name" value="RlmL_1st"/>
    <property type="match status" value="1"/>
</dbReference>
<dbReference type="Pfam" id="PF02926">
    <property type="entry name" value="THUMP"/>
    <property type="match status" value="1"/>
</dbReference>
<dbReference type="Pfam" id="PF01170">
    <property type="entry name" value="UPF0020"/>
    <property type="match status" value="1"/>
</dbReference>
<dbReference type="PIRSF" id="PIRSF037618">
    <property type="entry name" value="RNA_Mtase_bacteria_prd"/>
    <property type="match status" value="1"/>
</dbReference>
<dbReference type="SMART" id="SM00981">
    <property type="entry name" value="THUMP"/>
    <property type="match status" value="1"/>
</dbReference>
<dbReference type="SUPFAM" id="SSF53335">
    <property type="entry name" value="S-adenosyl-L-methionine-dependent methyltransferases"/>
    <property type="match status" value="2"/>
</dbReference>
<dbReference type="PROSITE" id="PS51165">
    <property type="entry name" value="THUMP"/>
    <property type="match status" value="1"/>
</dbReference>
<dbReference type="PROSITE" id="PS01261">
    <property type="entry name" value="UPF0020"/>
    <property type="match status" value="1"/>
</dbReference>
<reference key="1">
    <citation type="journal article" date="2000" name="Nature">
        <title>DNA sequence of both chromosomes of the cholera pathogen Vibrio cholerae.</title>
        <authorList>
            <person name="Heidelberg J.F."/>
            <person name="Eisen J.A."/>
            <person name="Nelson W.C."/>
            <person name="Clayton R.A."/>
            <person name="Gwinn M.L."/>
            <person name="Dodson R.J."/>
            <person name="Haft D.H."/>
            <person name="Hickey E.K."/>
            <person name="Peterson J.D."/>
            <person name="Umayam L.A."/>
            <person name="Gill S.R."/>
            <person name="Nelson K.E."/>
            <person name="Read T.D."/>
            <person name="Tettelin H."/>
            <person name="Richardson D.L."/>
            <person name="Ermolaeva M.D."/>
            <person name="Vamathevan J.J."/>
            <person name="Bass S."/>
            <person name="Qin H."/>
            <person name="Dragoi I."/>
            <person name="Sellers P."/>
            <person name="McDonald L.A."/>
            <person name="Utterback T.R."/>
            <person name="Fleischmann R.D."/>
            <person name="Nierman W.C."/>
            <person name="White O."/>
            <person name="Salzberg S.L."/>
            <person name="Smith H.O."/>
            <person name="Colwell R.R."/>
            <person name="Mekalanos J.J."/>
            <person name="Venter J.C."/>
            <person name="Fraser C.M."/>
        </authorList>
    </citation>
    <scope>NUCLEOTIDE SEQUENCE [LARGE SCALE GENOMIC DNA]</scope>
    <source>
        <strain>ATCC 39315 / El Tor Inaba N16961</strain>
    </source>
</reference>
<protein>
    <recommendedName>
        <fullName evidence="1">Ribosomal RNA large subunit methyltransferase K/L</fullName>
    </recommendedName>
    <domain>
        <recommendedName>
            <fullName evidence="1">23S rRNA m2G2445 methyltransferase</fullName>
            <ecNumber evidence="1">2.1.1.173</ecNumber>
        </recommendedName>
        <alternativeName>
            <fullName evidence="1">rRNA (guanine-N(2)-)-methyltransferase RlmL</fullName>
        </alternativeName>
    </domain>
    <domain>
        <recommendedName>
            <fullName evidence="1">23S rRNA m7G2069 methyltransferase</fullName>
            <ecNumber evidence="1">2.1.1.264</ecNumber>
        </recommendedName>
        <alternativeName>
            <fullName evidence="1">rRNA (guanine-N(7)-)-methyltransferase RlmK</fullName>
        </alternativeName>
    </domain>
</protein>
<keyword id="KW-0963">Cytoplasm</keyword>
<keyword id="KW-0489">Methyltransferase</keyword>
<keyword id="KW-1185">Reference proteome</keyword>
<keyword id="KW-0694">RNA-binding</keyword>
<keyword id="KW-0698">rRNA processing</keyword>
<keyword id="KW-0949">S-adenosyl-L-methionine</keyword>
<keyword id="KW-0808">Transferase</keyword>
<gene>
    <name evidence="1" type="primary">rlmL</name>
    <name type="ordered locus">VC_1488</name>
</gene>
<feature type="chain" id="PRO_0000366846" description="Ribosomal RNA large subunit methyltransferase K/L">
    <location>
        <begin position="1"/>
        <end position="708"/>
    </location>
</feature>
<feature type="domain" description="THUMP" evidence="1">
    <location>
        <begin position="43"/>
        <end position="154"/>
    </location>
</feature>